<gene>
    <name evidence="1" type="primary">secB</name>
    <name type="ordered locus">BAbS19_I19410</name>
</gene>
<name>SECB_BRUA1</name>
<feature type="chain" id="PRO_1000134364" description="Protein-export protein SecB">
    <location>
        <begin position="1"/>
        <end position="163"/>
    </location>
</feature>
<keyword id="KW-0143">Chaperone</keyword>
<keyword id="KW-0963">Cytoplasm</keyword>
<keyword id="KW-0653">Protein transport</keyword>
<keyword id="KW-0811">Translocation</keyword>
<keyword id="KW-0813">Transport</keyword>
<dbReference type="EMBL" id="CP000887">
    <property type="protein sequence ID" value="ACD73423.1"/>
    <property type="molecule type" value="Genomic_DNA"/>
</dbReference>
<dbReference type="RefSeq" id="WP_002965136.1">
    <property type="nucleotide sequence ID" value="NC_010742.1"/>
</dbReference>
<dbReference type="SMR" id="B2S971"/>
<dbReference type="GeneID" id="97534666"/>
<dbReference type="KEGG" id="bmc:BAbS19_I19410"/>
<dbReference type="HOGENOM" id="CLU_111574_0_0_5"/>
<dbReference type="Proteomes" id="UP000002565">
    <property type="component" value="Chromosome 1"/>
</dbReference>
<dbReference type="GO" id="GO:0005737">
    <property type="term" value="C:cytoplasm"/>
    <property type="evidence" value="ECO:0007669"/>
    <property type="project" value="UniProtKB-SubCell"/>
</dbReference>
<dbReference type="GO" id="GO:0051082">
    <property type="term" value="F:unfolded protein binding"/>
    <property type="evidence" value="ECO:0007669"/>
    <property type="project" value="InterPro"/>
</dbReference>
<dbReference type="GO" id="GO:0006457">
    <property type="term" value="P:protein folding"/>
    <property type="evidence" value="ECO:0007669"/>
    <property type="project" value="UniProtKB-UniRule"/>
</dbReference>
<dbReference type="GO" id="GO:0051262">
    <property type="term" value="P:protein tetramerization"/>
    <property type="evidence" value="ECO:0007669"/>
    <property type="project" value="InterPro"/>
</dbReference>
<dbReference type="GO" id="GO:0015031">
    <property type="term" value="P:protein transport"/>
    <property type="evidence" value="ECO:0007669"/>
    <property type="project" value="UniProtKB-UniRule"/>
</dbReference>
<dbReference type="Gene3D" id="3.10.420.10">
    <property type="entry name" value="SecB-like"/>
    <property type="match status" value="1"/>
</dbReference>
<dbReference type="HAMAP" id="MF_00821">
    <property type="entry name" value="SecB"/>
    <property type="match status" value="1"/>
</dbReference>
<dbReference type="InterPro" id="IPR003708">
    <property type="entry name" value="SecB"/>
</dbReference>
<dbReference type="InterPro" id="IPR035958">
    <property type="entry name" value="SecB-like_sf"/>
</dbReference>
<dbReference type="NCBIfam" id="NF004392">
    <property type="entry name" value="PRK05751.1-3"/>
    <property type="match status" value="1"/>
</dbReference>
<dbReference type="NCBIfam" id="TIGR00809">
    <property type="entry name" value="secB"/>
    <property type="match status" value="1"/>
</dbReference>
<dbReference type="PANTHER" id="PTHR36918">
    <property type="match status" value="1"/>
</dbReference>
<dbReference type="PANTHER" id="PTHR36918:SF1">
    <property type="entry name" value="PROTEIN-EXPORT PROTEIN SECB"/>
    <property type="match status" value="1"/>
</dbReference>
<dbReference type="Pfam" id="PF02556">
    <property type="entry name" value="SecB"/>
    <property type="match status" value="1"/>
</dbReference>
<dbReference type="PRINTS" id="PR01594">
    <property type="entry name" value="SECBCHAPRONE"/>
</dbReference>
<dbReference type="SUPFAM" id="SSF54611">
    <property type="entry name" value="SecB-like"/>
    <property type="match status" value="1"/>
</dbReference>
<accession>B2S971</accession>
<protein>
    <recommendedName>
        <fullName evidence="1">Protein-export protein SecB</fullName>
    </recommendedName>
</protein>
<organism>
    <name type="scientific">Brucella abortus (strain S19)</name>
    <dbReference type="NCBI Taxonomy" id="430066"/>
    <lineage>
        <taxon>Bacteria</taxon>
        <taxon>Pseudomonadati</taxon>
        <taxon>Pseudomonadota</taxon>
        <taxon>Alphaproteobacteria</taxon>
        <taxon>Hyphomicrobiales</taxon>
        <taxon>Brucellaceae</taxon>
        <taxon>Brucella/Ochrobactrum group</taxon>
        <taxon>Brucella</taxon>
    </lineage>
</organism>
<proteinExistence type="inferred from homology"/>
<evidence type="ECO:0000255" key="1">
    <source>
        <dbReference type="HAMAP-Rule" id="MF_00821"/>
    </source>
</evidence>
<sequence>MSDKAAGETKNGNGATTEPSLNILAQYVKDLSFESPGAPLSLRPREKAPSININVNVNANPLSETDFDVVLTLEAKAVDGKDILFNTELVYGGVFRIQGIPQEHMLPLLFIECPRLLFPFARQIIADATRNGGYPPLMIDPIDFAQMFQQRMAEEQAKSAVKS</sequence>
<comment type="function">
    <text evidence="1">One of the proteins required for the normal export of preproteins out of the cell cytoplasm. It is a molecular chaperone that binds to a subset of precursor proteins, maintaining them in a translocation-competent state. It also specifically binds to its receptor SecA.</text>
</comment>
<comment type="subunit">
    <text evidence="1">Homotetramer, a dimer of dimers. One homotetramer interacts with 1 SecA dimer.</text>
</comment>
<comment type="subcellular location">
    <subcellularLocation>
        <location evidence="1">Cytoplasm</location>
    </subcellularLocation>
</comment>
<comment type="similarity">
    <text evidence="1">Belongs to the SecB family.</text>
</comment>
<reference key="1">
    <citation type="journal article" date="2008" name="PLoS ONE">
        <title>Genome sequence of Brucella abortus vaccine strain S19 compared to virulent strains yields candidate virulence genes.</title>
        <authorList>
            <person name="Crasta O.R."/>
            <person name="Folkerts O."/>
            <person name="Fei Z."/>
            <person name="Mane S.P."/>
            <person name="Evans C."/>
            <person name="Martino-Catt S."/>
            <person name="Bricker B."/>
            <person name="Yu G."/>
            <person name="Du L."/>
            <person name="Sobral B.W."/>
        </authorList>
    </citation>
    <scope>NUCLEOTIDE SEQUENCE [LARGE SCALE GENOMIC DNA]</scope>
    <source>
        <strain>S19</strain>
    </source>
</reference>